<feature type="chain" id="PRO_0000381567" description="Biotin synthase">
    <location>
        <begin position="1"/>
        <end position="351"/>
    </location>
</feature>
<feature type="domain" description="Radical SAM core" evidence="2">
    <location>
        <begin position="44"/>
        <end position="262"/>
    </location>
</feature>
<feature type="binding site" evidence="1">
    <location>
        <position position="59"/>
    </location>
    <ligand>
        <name>[4Fe-4S] cluster</name>
        <dbReference type="ChEBI" id="CHEBI:49883"/>
        <note>4Fe-4S-S-AdoMet</note>
    </ligand>
</feature>
<feature type="binding site" evidence="1">
    <location>
        <position position="63"/>
    </location>
    <ligand>
        <name>[4Fe-4S] cluster</name>
        <dbReference type="ChEBI" id="CHEBI:49883"/>
        <note>4Fe-4S-S-AdoMet</note>
    </ligand>
</feature>
<feature type="binding site" evidence="1">
    <location>
        <position position="66"/>
    </location>
    <ligand>
        <name>[4Fe-4S] cluster</name>
        <dbReference type="ChEBI" id="CHEBI:49883"/>
        <note>4Fe-4S-S-AdoMet</note>
    </ligand>
</feature>
<feature type="binding site" evidence="1">
    <location>
        <position position="103"/>
    </location>
    <ligand>
        <name>[2Fe-2S] cluster</name>
        <dbReference type="ChEBI" id="CHEBI:190135"/>
    </ligand>
</feature>
<feature type="binding site" evidence="1">
    <location>
        <position position="134"/>
    </location>
    <ligand>
        <name>[2Fe-2S] cluster</name>
        <dbReference type="ChEBI" id="CHEBI:190135"/>
    </ligand>
</feature>
<feature type="binding site" evidence="1">
    <location>
        <position position="194"/>
    </location>
    <ligand>
        <name>[2Fe-2S] cluster</name>
        <dbReference type="ChEBI" id="CHEBI:190135"/>
    </ligand>
</feature>
<feature type="binding site" evidence="1">
    <location>
        <position position="266"/>
    </location>
    <ligand>
        <name>[2Fe-2S] cluster</name>
        <dbReference type="ChEBI" id="CHEBI:190135"/>
    </ligand>
</feature>
<gene>
    <name evidence="1" type="primary">bioB</name>
    <name type="ordered locus">PST_3866</name>
</gene>
<proteinExistence type="inferred from homology"/>
<dbReference type="EC" id="2.8.1.6" evidence="1"/>
<dbReference type="EMBL" id="CP000304">
    <property type="protein sequence ID" value="ABP81489.1"/>
    <property type="molecule type" value="Genomic_DNA"/>
</dbReference>
<dbReference type="RefSeq" id="WP_011914874.1">
    <property type="nucleotide sequence ID" value="NC_009434.1"/>
</dbReference>
<dbReference type="SMR" id="A4VR88"/>
<dbReference type="GeneID" id="75212253"/>
<dbReference type="KEGG" id="psa:PST_3866"/>
<dbReference type="eggNOG" id="COG0502">
    <property type="taxonomic scope" value="Bacteria"/>
</dbReference>
<dbReference type="HOGENOM" id="CLU_033172_1_2_6"/>
<dbReference type="UniPathway" id="UPA00078">
    <property type="reaction ID" value="UER00162"/>
</dbReference>
<dbReference type="Proteomes" id="UP000000233">
    <property type="component" value="Chromosome"/>
</dbReference>
<dbReference type="GO" id="GO:0051537">
    <property type="term" value="F:2 iron, 2 sulfur cluster binding"/>
    <property type="evidence" value="ECO:0007669"/>
    <property type="project" value="UniProtKB-KW"/>
</dbReference>
<dbReference type="GO" id="GO:0051539">
    <property type="term" value="F:4 iron, 4 sulfur cluster binding"/>
    <property type="evidence" value="ECO:0007669"/>
    <property type="project" value="UniProtKB-KW"/>
</dbReference>
<dbReference type="GO" id="GO:0004076">
    <property type="term" value="F:biotin synthase activity"/>
    <property type="evidence" value="ECO:0007669"/>
    <property type="project" value="UniProtKB-UniRule"/>
</dbReference>
<dbReference type="GO" id="GO:0005506">
    <property type="term" value="F:iron ion binding"/>
    <property type="evidence" value="ECO:0007669"/>
    <property type="project" value="UniProtKB-UniRule"/>
</dbReference>
<dbReference type="GO" id="GO:0009102">
    <property type="term" value="P:biotin biosynthetic process"/>
    <property type="evidence" value="ECO:0007669"/>
    <property type="project" value="UniProtKB-UniRule"/>
</dbReference>
<dbReference type="CDD" id="cd01335">
    <property type="entry name" value="Radical_SAM"/>
    <property type="match status" value="1"/>
</dbReference>
<dbReference type="FunFam" id="3.20.20.70:FF:000011">
    <property type="entry name" value="Biotin synthase"/>
    <property type="match status" value="1"/>
</dbReference>
<dbReference type="Gene3D" id="3.20.20.70">
    <property type="entry name" value="Aldolase class I"/>
    <property type="match status" value="1"/>
</dbReference>
<dbReference type="HAMAP" id="MF_01694">
    <property type="entry name" value="BioB"/>
    <property type="match status" value="1"/>
</dbReference>
<dbReference type="InterPro" id="IPR013785">
    <property type="entry name" value="Aldolase_TIM"/>
</dbReference>
<dbReference type="InterPro" id="IPR010722">
    <property type="entry name" value="BATS_dom"/>
</dbReference>
<dbReference type="InterPro" id="IPR002684">
    <property type="entry name" value="Biotin_synth/BioAB"/>
</dbReference>
<dbReference type="InterPro" id="IPR024177">
    <property type="entry name" value="Biotin_synthase"/>
</dbReference>
<dbReference type="InterPro" id="IPR006638">
    <property type="entry name" value="Elp3/MiaA/NifB-like_rSAM"/>
</dbReference>
<dbReference type="InterPro" id="IPR007197">
    <property type="entry name" value="rSAM"/>
</dbReference>
<dbReference type="NCBIfam" id="TIGR00433">
    <property type="entry name" value="bioB"/>
    <property type="match status" value="1"/>
</dbReference>
<dbReference type="PANTHER" id="PTHR22976">
    <property type="entry name" value="BIOTIN SYNTHASE"/>
    <property type="match status" value="1"/>
</dbReference>
<dbReference type="PANTHER" id="PTHR22976:SF2">
    <property type="entry name" value="BIOTIN SYNTHASE, MITOCHONDRIAL"/>
    <property type="match status" value="1"/>
</dbReference>
<dbReference type="Pfam" id="PF06968">
    <property type="entry name" value="BATS"/>
    <property type="match status" value="1"/>
</dbReference>
<dbReference type="Pfam" id="PF04055">
    <property type="entry name" value="Radical_SAM"/>
    <property type="match status" value="1"/>
</dbReference>
<dbReference type="PIRSF" id="PIRSF001619">
    <property type="entry name" value="Biotin_synth"/>
    <property type="match status" value="1"/>
</dbReference>
<dbReference type="SFLD" id="SFLDF00272">
    <property type="entry name" value="biotin_synthase"/>
    <property type="match status" value="1"/>
</dbReference>
<dbReference type="SFLD" id="SFLDG01278">
    <property type="entry name" value="biotin_synthase_like"/>
    <property type="match status" value="1"/>
</dbReference>
<dbReference type="SMART" id="SM00876">
    <property type="entry name" value="BATS"/>
    <property type="match status" value="1"/>
</dbReference>
<dbReference type="SMART" id="SM00729">
    <property type="entry name" value="Elp3"/>
    <property type="match status" value="1"/>
</dbReference>
<dbReference type="SUPFAM" id="SSF102114">
    <property type="entry name" value="Radical SAM enzymes"/>
    <property type="match status" value="1"/>
</dbReference>
<dbReference type="PROSITE" id="PS51918">
    <property type="entry name" value="RADICAL_SAM"/>
    <property type="match status" value="1"/>
</dbReference>
<evidence type="ECO:0000255" key="1">
    <source>
        <dbReference type="HAMAP-Rule" id="MF_01694"/>
    </source>
</evidence>
<evidence type="ECO:0000255" key="2">
    <source>
        <dbReference type="PROSITE-ProRule" id="PRU01266"/>
    </source>
</evidence>
<accession>A4VR88</accession>
<keyword id="KW-0001">2Fe-2S</keyword>
<keyword id="KW-0004">4Fe-4S</keyword>
<keyword id="KW-0093">Biotin biosynthesis</keyword>
<keyword id="KW-0408">Iron</keyword>
<keyword id="KW-0411">Iron-sulfur</keyword>
<keyword id="KW-0479">Metal-binding</keyword>
<keyword id="KW-1185">Reference proteome</keyword>
<keyword id="KW-0949">S-adenosyl-L-methionine</keyword>
<keyword id="KW-0808">Transferase</keyword>
<sequence length="351" mass="39020">MSATSASVTRHDWSLAEVKALFEQPFNDLLFQAQTVHRQHFDPNRVQVSTLLSIKTGACPEDCKYCPQSGHYNTGLDKEKLMEVQKVLEAAAEAKAIGSTRFCMGAAWKHPSAKDMPYVLKMVEGVKAMGLETCMTLGKLDQEQTRALAAAGLDYYNHNLDTSPEFYGNIITTRTYAERLETLSYVREAGMKICSGGILGMGESLDDRAGLLIQLANLPEHPESVPINMLVKVKGTPLAEEQDVDPFDFIRMLAVARIMMPKSHVRLSAGREQMNEQMQALAFFAGANSIFYGEKLLTTANPQADKDMQLFARLGIKPEERQEHADEVHQAAIEQALIEQRDSKLFYNAAV</sequence>
<comment type="function">
    <text evidence="1">Catalyzes the conversion of dethiobiotin (DTB) to biotin by the insertion of a sulfur atom into dethiobiotin via a radical-based mechanism.</text>
</comment>
<comment type="catalytic activity">
    <reaction evidence="1">
        <text>(4R,5S)-dethiobiotin + (sulfur carrier)-SH + 2 reduced [2Fe-2S]-[ferredoxin] + 2 S-adenosyl-L-methionine = (sulfur carrier)-H + biotin + 2 5'-deoxyadenosine + 2 L-methionine + 2 oxidized [2Fe-2S]-[ferredoxin]</text>
        <dbReference type="Rhea" id="RHEA:22060"/>
        <dbReference type="Rhea" id="RHEA-COMP:10000"/>
        <dbReference type="Rhea" id="RHEA-COMP:10001"/>
        <dbReference type="Rhea" id="RHEA-COMP:14737"/>
        <dbReference type="Rhea" id="RHEA-COMP:14739"/>
        <dbReference type="ChEBI" id="CHEBI:17319"/>
        <dbReference type="ChEBI" id="CHEBI:29917"/>
        <dbReference type="ChEBI" id="CHEBI:33737"/>
        <dbReference type="ChEBI" id="CHEBI:33738"/>
        <dbReference type="ChEBI" id="CHEBI:57586"/>
        <dbReference type="ChEBI" id="CHEBI:57844"/>
        <dbReference type="ChEBI" id="CHEBI:59789"/>
        <dbReference type="ChEBI" id="CHEBI:64428"/>
        <dbReference type="ChEBI" id="CHEBI:149473"/>
        <dbReference type="EC" id="2.8.1.6"/>
    </reaction>
</comment>
<comment type="cofactor">
    <cofactor evidence="1">
        <name>[4Fe-4S] cluster</name>
        <dbReference type="ChEBI" id="CHEBI:49883"/>
    </cofactor>
    <text evidence="1">Binds 1 [4Fe-4S] cluster. The cluster is coordinated with 3 cysteines and an exchangeable S-adenosyl-L-methionine.</text>
</comment>
<comment type="cofactor">
    <cofactor evidence="1">
        <name>[2Fe-2S] cluster</name>
        <dbReference type="ChEBI" id="CHEBI:190135"/>
    </cofactor>
    <text evidence="1">Binds 1 [2Fe-2S] cluster. The cluster is coordinated with 3 cysteines and 1 arginine.</text>
</comment>
<comment type="pathway">
    <text evidence="1">Cofactor biosynthesis; biotin biosynthesis; biotin from 7,8-diaminononanoate: step 2/2.</text>
</comment>
<comment type="subunit">
    <text evidence="1">Homodimer.</text>
</comment>
<comment type="similarity">
    <text evidence="1">Belongs to the radical SAM superfamily. Biotin synthase family.</text>
</comment>
<organism>
    <name type="scientific">Stutzerimonas stutzeri (strain A1501)</name>
    <name type="common">Pseudomonas stutzeri</name>
    <dbReference type="NCBI Taxonomy" id="379731"/>
    <lineage>
        <taxon>Bacteria</taxon>
        <taxon>Pseudomonadati</taxon>
        <taxon>Pseudomonadota</taxon>
        <taxon>Gammaproteobacteria</taxon>
        <taxon>Pseudomonadales</taxon>
        <taxon>Pseudomonadaceae</taxon>
        <taxon>Stutzerimonas</taxon>
    </lineage>
</organism>
<protein>
    <recommendedName>
        <fullName evidence="1">Biotin synthase</fullName>
        <ecNumber evidence="1">2.8.1.6</ecNumber>
    </recommendedName>
</protein>
<name>BIOB_STUS1</name>
<reference key="1">
    <citation type="journal article" date="2008" name="Proc. Natl. Acad. Sci. U.S.A.">
        <title>Nitrogen fixation island and rhizosphere competence traits in the genome of root-associated Pseudomonas stutzeri A1501.</title>
        <authorList>
            <person name="Yan Y."/>
            <person name="Yang J."/>
            <person name="Dou Y."/>
            <person name="Chen M."/>
            <person name="Ping S."/>
            <person name="Peng J."/>
            <person name="Lu W."/>
            <person name="Zhang W."/>
            <person name="Yao Z."/>
            <person name="Li H."/>
            <person name="Liu W."/>
            <person name="He S."/>
            <person name="Geng L."/>
            <person name="Zhang X."/>
            <person name="Yang F."/>
            <person name="Yu H."/>
            <person name="Zhan Y."/>
            <person name="Li D."/>
            <person name="Lin Z."/>
            <person name="Wang Y."/>
            <person name="Elmerich C."/>
            <person name="Lin M."/>
            <person name="Jin Q."/>
        </authorList>
    </citation>
    <scope>NUCLEOTIDE SEQUENCE [LARGE SCALE GENOMIC DNA]</scope>
    <source>
        <strain>A1501</strain>
    </source>
</reference>